<name>RL11_BURO0</name>
<organism>
    <name type="scientific">Burkholderia orbicola (strain MC0-3)</name>
    <dbReference type="NCBI Taxonomy" id="406425"/>
    <lineage>
        <taxon>Bacteria</taxon>
        <taxon>Pseudomonadati</taxon>
        <taxon>Pseudomonadota</taxon>
        <taxon>Betaproteobacteria</taxon>
        <taxon>Burkholderiales</taxon>
        <taxon>Burkholderiaceae</taxon>
        <taxon>Burkholderia</taxon>
        <taxon>Burkholderia cepacia complex</taxon>
        <taxon>Burkholderia orbicola</taxon>
    </lineage>
</organism>
<proteinExistence type="inferred from homology"/>
<gene>
    <name evidence="1" type="primary">rplK</name>
    <name type="ordered locus">Bcenmc03_0315</name>
</gene>
<protein>
    <recommendedName>
        <fullName evidence="1">Large ribosomal subunit protein uL11</fullName>
    </recommendedName>
    <alternativeName>
        <fullName evidence="2">50S ribosomal protein L11</fullName>
    </alternativeName>
</protein>
<reference key="1">
    <citation type="submission" date="2008-02" db="EMBL/GenBank/DDBJ databases">
        <title>Complete sequence of chromosome 1 of Burkholderia cenocepacia MC0-3.</title>
        <authorList>
            <person name="Copeland A."/>
            <person name="Lucas S."/>
            <person name="Lapidus A."/>
            <person name="Barry K."/>
            <person name="Bruce D."/>
            <person name="Goodwin L."/>
            <person name="Glavina del Rio T."/>
            <person name="Dalin E."/>
            <person name="Tice H."/>
            <person name="Pitluck S."/>
            <person name="Chain P."/>
            <person name="Malfatti S."/>
            <person name="Shin M."/>
            <person name="Vergez L."/>
            <person name="Schmutz J."/>
            <person name="Larimer F."/>
            <person name="Land M."/>
            <person name="Hauser L."/>
            <person name="Kyrpides N."/>
            <person name="Mikhailova N."/>
            <person name="Tiedje J."/>
            <person name="Richardson P."/>
        </authorList>
    </citation>
    <scope>NUCLEOTIDE SEQUENCE [LARGE SCALE GENOMIC DNA]</scope>
    <source>
        <strain>MC0-3</strain>
    </source>
</reference>
<keyword id="KW-0488">Methylation</keyword>
<keyword id="KW-0687">Ribonucleoprotein</keyword>
<keyword id="KW-0689">Ribosomal protein</keyword>
<keyword id="KW-0694">RNA-binding</keyword>
<keyword id="KW-0699">rRNA-binding</keyword>
<sequence length="143" mass="14916">MAKKIIGFIKLQIPAGKANPSPPVGPALGQRGLNIMEFCKAFNAQTQGMEPGLPVPVVITAFADKSFTFVMKTPPATVLIKKAAKVDKGSSKPHTDKVGSITRAQAEEIAKTKMPDLTAADLDAAVRTIAGSARSMGITVEGV</sequence>
<evidence type="ECO:0000255" key="1">
    <source>
        <dbReference type="HAMAP-Rule" id="MF_00736"/>
    </source>
</evidence>
<evidence type="ECO:0000305" key="2"/>
<dbReference type="EMBL" id="CP000958">
    <property type="protein sequence ID" value="ACA89495.1"/>
    <property type="molecule type" value="Genomic_DNA"/>
</dbReference>
<dbReference type="RefSeq" id="WP_006477201.1">
    <property type="nucleotide sequence ID" value="NC_010508.1"/>
</dbReference>
<dbReference type="SMR" id="B1JU10"/>
<dbReference type="GeneID" id="93193463"/>
<dbReference type="KEGG" id="bcm:Bcenmc03_0315"/>
<dbReference type="HOGENOM" id="CLU_074237_2_0_4"/>
<dbReference type="Proteomes" id="UP000002169">
    <property type="component" value="Chromosome 1"/>
</dbReference>
<dbReference type="GO" id="GO:0022625">
    <property type="term" value="C:cytosolic large ribosomal subunit"/>
    <property type="evidence" value="ECO:0007669"/>
    <property type="project" value="TreeGrafter"/>
</dbReference>
<dbReference type="GO" id="GO:0070180">
    <property type="term" value="F:large ribosomal subunit rRNA binding"/>
    <property type="evidence" value="ECO:0007669"/>
    <property type="project" value="UniProtKB-UniRule"/>
</dbReference>
<dbReference type="GO" id="GO:0003735">
    <property type="term" value="F:structural constituent of ribosome"/>
    <property type="evidence" value="ECO:0007669"/>
    <property type="project" value="InterPro"/>
</dbReference>
<dbReference type="GO" id="GO:0006412">
    <property type="term" value="P:translation"/>
    <property type="evidence" value="ECO:0007669"/>
    <property type="project" value="UniProtKB-UniRule"/>
</dbReference>
<dbReference type="CDD" id="cd00349">
    <property type="entry name" value="Ribosomal_L11"/>
    <property type="match status" value="1"/>
</dbReference>
<dbReference type="FunFam" id="1.10.10.250:FF:000001">
    <property type="entry name" value="50S ribosomal protein L11"/>
    <property type="match status" value="1"/>
</dbReference>
<dbReference type="FunFam" id="3.30.1550.10:FF:000001">
    <property type="entry name" value="50S ribosomal protein L11"/>
    <property type="match status" value="1"/>
</dbReference>
<dbReference type="Gene3D" id="1.10.10.250">
    <property type="entry name" value="Ribosomal protein L11, C-terminal domain"/>
    <property type="match status" value="1"/>
</dbReference>
<dbReference type="Gene3D" id="3.30.1550.10">
    <property type="entry name" value="Ribosomal protein L11/L12, N-terminal domain"/>
    <property type="match status" value="1"/>
</dbReference>
<dbReference type="HAMAP" id="MF_00736">
    <property type="entry name" value="Ribosomal_uL11"/>
    <property type="match status" value="1"/>
</dbReference>
<dbReference type="InterPro" id="IPR000911">
    <property type="entry name" value="Ribosomal_uL11"/>
</dbReference>
<dbReference type="InterPro" id="IPR006519">
    <property type="entry name" value="Ribosomal_uL11_bac-typ"/>
</dbReference>
<dbReference type="InterPro" id="IPR020783">
    <property type="entry name" value="Ribosomal_uL11_C"/>
</dbReference>
<dbReference type="InterPro" id="IPR036769">
    <property type="entry name" value="Ribosomal_uL11_C_sf"/>
</dbReference>
<dbReference type="InterPro" id="IPR020785">
    <property type="entry name" value="Ribosomal_uL11_CS"/>
</dbReference>
<dbReference type="InterPro" id="IPR020784">
    <property type="entry name" value="Ribosomal_uL11_N"/>
</dbReference>
<dbReference type="InterPro" id="IPR036796">
    <property type="entry name" value="Ribosomal_uL11_N_sf"/>
</dbReference>
<dbReference type="NCBIfam" id="TIGR01632">
    <property type="entry name" value="L11_bact"/>
    <property type="match status" value="1"/>
</dbReference>
<dbReference type="PANTHER" id="PTHR11661">
    <property type="entry name" value="60S RIBOSOMAL PROTEIN L12"/>
    <property type="match status" value="1"/>
</dbReference>
<dbReference type="PANTHER" id="PTHR11661:SF1">
    <property type="entry name" value="LARGE RIBOSOMAL SUBUNIT PROTEIN UL11M"/>
    <property type="match status" value="1"/>
</dbReference>
<dbReference type="Pfam" id="PF00298">
    <property type="entry name" value="Ribosomal_L11"/>
    <property type="match status" value="1"/>
</dbReference>
<dbReference type="Pfam" id="PF03946">
    <property type="entry name" value="Ribosomal_L11_N"/>
    <property type="match status" value="1"/>
</dbReference>
<dbReference type="SMART" id="SM00649">
    <property type="entry name" value="RL11"/>
    <property type="match status" value="1"/>
</dbReference>
<dbReference type="SUPFAM" id="SSF54747">
    <property type="entry name" value="Ribosomal L11/L12e N-terminal domain"/>
    <property type="match status" value="1"/>
</dbReference>
<dbReference type="SUPFAM" id="SSF46906">
    <property type="entry name" value="Ribosomal protein L11, C-terminal domain"/>
    <property type="match status" value="1"/>
</dbReference>
<dbReference type="PROSITE" id="PS00359">
    <property type="entry name" value="RIBOSOMAL_L11"/>
    <property type="match status" value="1"/>
</dbReference>
<feature type="chain" id="PRO_1000132872" description="Large ribosomal subunit protein uL11">
    <location>
        <begin position="1"/>
        <end position="143"/>
    </location>
</feature>
<accession>B1JU10</accession>
<comment type="function">
    <text evidence="1">Forms part of the ribosomal stalk which helps the ribosome interact with GTP-bound translation factors.</text>
</comment>
<comment type="subunit">
    <text evidence="1">Part of the ribosomal stalk of the 50S ribosomal subunit. Interacts with L10 and the large rRNA to form the base of the stalk. L10 forms an elongated spine to which L12 dimers bind in a sequential fashion forming a multimeric L10(L12)X complex.</text>
</comment>
<comment type="PTM">
    <text evidence="1">One or more lysine residues are methylated.</text>
</comment>
<comment type="similarity">
    <text evidence="1">Belongs to the universal ribosomal protein uL11 family.</text>
</comment>